<proteinExistence type="inferred from homology"/>
<reference key="1">
    <citation type="journal article" date="2001" name="Nature">
        <title>Genome sequence of enterohaemorrhagic Escherichia coli O157:H7.</title>
        <authorList>
            <person name="Perna N.T."/>
            <person name="Plunkett G. III"/>
            <person name="Burland V."/>
            <person name="Mau B."/>
            <person name="Glasner J.D."/>
            <person name="Rose D.J."/>
            <person name="Mayhew G.F."/>
            <person name="Evans P.S."/>
            <person name="Gregor J."/>
            <person name="Kirkpatrick H.A."/>
            <person name="Posfai G."/>
            <person name="Hackett J."/>
            <person name="Klink S."/>
            <person name="Boutin A."/>
            <person name="Shao Y."/>
            <person name="Miller L."/>
            <person name="Grotbeck E.J."/>
            <person name="Davis N.W."/>
            <person name="Lim A."/>
            <person name="Dimalanta E.T."/>
            <person name="Potamousis K."/>
            <person name="Apodaca J."/>
            <person name="Anantharaman T.S."/>
            <person name="Lin J."/>
            <person name="Yen G."/>
            <person name="Schwartz D.C."/>
            <person name="Welch R.A."/>
            <person name="Blattner F.R."/>
        </authorList>
    </citation>
    <scope>NUCLEOTIDE SEQUENCE [LARGE SCALE GENOMIC DNA]</scope>
    <source>
        <strain>O157:H7 / EDL933 / ATCC 700927 / EHEC</strain>
    </source>
</reference>
<reference key="2">
    <citation type="journal article" date="2001" name="DNA Res.">
        <title>Complete genome sequence of enterohemorrhagic Escherichia coli O157:H7 and genomic comparison with a laboratory strain K-12.</title>
        <authorList>
            <person name="Hayashi T."/>
            <person name="Makino K."/>
            <person name="Ohnishi M."/>
            <person name="Kurokawa K."/>
            <person name="Ishii K."/>
            <person name="Yokoyama K."/>
            <person name="Han C.-G."/>
            <person name="Ohtsubo E."/>
            <person name="Nakayama K."/>
            <person name="Murata T."/>
            <person name="Tanaka M."/>
            <person name="Tobe T."/>
            <person name="Iida T."/>
            <person name="Takami H."/>
            <person name="Honda T."/>
            <person name="Sasakawa C."/>
            <person name="Ogasawara N."/>
            <person name="Yasunaga T."/>
            <person name="Kuhara S."/>
            <person name="Shiba T."/>
            <person name="Hattori M."/>
            <person name="Shinagawa H."/>
        </authorList>
    </citation>
    <scope>NUCLEOTIDE SEQUENCE [LARGE SCALE GENOMIC DNA]</scope>
    <source>
        <strain>O157:H7 / Sakai / RIMD 0509952 / EHEC</strain>
    </source>
</reference>
<feature type="signal peptide" evidence="2">
    <location>
        <begin position="1"/>
        <end position="21"/>
    </location>
</feature>
<feature type="chain" id="PRO_0000042808" description="Minor curlin subunit">
    <location>
        <begin position="22"/>
        <end position="151"/>
    </location>
</feature>
<accession>P0ABK8</accession>
<accession>P39828</accession>
<gene>
    <name type="primary">csgB</name>
    <name type="ordered locus">Z1675</name>
    <name type="ordered locus">ECs1419</name>
</gene>
<protein>
    <recommendedName>
        <fullName>Minor curlin subunit</fullName>
    </recommendedName>
</protein>
<evidence type="ECO:0000250" key="1"/>
<evidence type="ECO:0000255" key="2"/>
<evidence type="ECO:0000305" key="3"/>
<comment type="function">
    <text evidence="1">Curlin is the structural subunit of the curli. Curli are coiled surface structures that assemble preferentially at growth temperatures below 37 degrees Celsius. Curli can bind to fibronectin. The minor subunit is the nucleation component of curlin monomers (By similarity).</text>
</comment>
<comment type="subcellular location">
    <subcellularLocation>
        <location>Fimbrium</location>
    </subcellularLocation>
    <text>Part of the curli surface structure.</text>
</comment>
<comment type="similarity">
    <text evidence="3">Belongs to the CsgA/CsgB family.</text>
</comment>
<name>CSGB_ECO57</name>
<dbReference type="EMBL" id="AE005174">
    <property type="protein sequence ID" value="AAG55787.1"/>
    <property type="molecule type" value="Genomic_DNA"/>
</dbReference>
<dbReference type="EMBL" id="BA000007">
    <property type="protein sequence ID" value="BAB34842.1"/>
    <property type="molecule type" value="Genomic_DNA"/>
</dbReference>
<dbReference type="PIR" id="C90806">
    <property type="entry name" value="C90806"/>
</dbReference>
<dbReference type="PIR" id="G85665">
    <property type="entry name" value="G85665"/>
</dbReference>
<dbReference type="RefSeq" id="NP_309446.1">
    <property type="nucleotide sequence ID" value="NC_002695.1"/>
</dbReference>
<dbReference type="RefSeq" id="WP_000791650.1">
    <property type="nucleotide sequence ID" value="NZ_VOAI01000018.1"/>
</dbReference>
<dbReference type="SMR" id="P0ABK8"/>
<dbReference type="STRING" id="155864.Z1675"/>
<dbReference type="GeneID" id="75203629"/>
<dbReference type="GeneID" id="912479"/>
<dbReference type="KEGG" id="ece:Z1675"/>
<dbReference type="KEGG" id="ecs:ECs_1419"/>
<dbReference type="PATRIC" id="fig|386585.9.peg.1520"/>
<dbReference type="eggNOG" id="ENOG5033BC9">
    <property type="taxonomic scope" value="Bacteria"/>
</dbReference>
<dbReference type="HOGENOM" id="CLU_116264_1_0_6"/>
<dbReference type="OMA" id="NFGNTAY"/>
<dbReference type="Proteomes" id="UP000000558">
    <property type="component" value="Chromosome"/>
</dbReference>
<dbReference type="Proteomes" id="UP000002519">
    <property type="component" value="Chromosome"/>
</dbReference>
<dbReference type="GO" id="GO:0009289">
    <property type="term" value="C:pilus"/>
    <property type="evidence" value="ECO:0007669"/>
    <property type="project" value="UniProtKB-SubCell"/>
</dbReference>
<dbReference type="GO" id="GO:0007155">
    <property type="term" value="P:cell adhesion"/>
    <property type="evidence" value="ECO:0007669"/>
    <property type="project" value="InterPro"/>
</dbReference>
<dbReference type="InterPro" id="IPR009742">
    <property type="entry name" value="Curlin_rpt"/>
</dbReference>
<dbReference type="NCBIfam" id="NF007506">
    <property type="entry name" value="PRK10101.1"/>
    <property type="match status" value="1"/>
</dbReference>
<dbReference type="Pfam" id="PF07012">
    <property type="entry name" value="Curlin_rpt"/>
    <property type="match status" value="3"/>
</dbReference>
<keyword id="KW-0281">Fimbrium</keyword>
<keyword id="KW-1185">Reference proteome</keyword>
<keyword id="KW-0732">Signal</keyword>
<sequence length="151" mass="15882">MKNKLLFMMLTILGAPGIAAAAGYDLANSEYNFAVNELSKSSFNQAAIIGQAGTNNSAQLRQGGSKLLAVVAQEGSSNRAKIDQTGDYNLAYIDQAGSANDASISQGAYGNTAMIIQKGSGNKANITQYGTQKTAIVVQRQSQMAIRVTQR</sequence>
<organism>
    <name type="scientific">Escherichia coli O157:H7</name>
    <dbReference type="NCBI Taxonomy" id="83334"/>
    <lineage>
        <taxon>Bacteria</taxon>
        <taxon>Pseudomonadati</taxon>
        <taxon>Pseudomonadota</taxon>
        <taxon>Gammaproteobacteria</taxon>
        <taxon>Enterobacterales</taxon>
        <taxon>Enterobacteriaceae</taxon>
        <taxon>Escherichia</taxon>
    </lineage>
</organism>